<organism>
    <name type="scientific">Mesorhizobium japonicum (strain LMG 29417 / CECT 9101 / MAFF 303099)</name>
    <name type="common">Mesorhizobium loti (strain MAFF 303099)</name>
    <dbReference type="NCBI Taxonomy" id="266835"/>
    <lineage>
        <taxon>Bacteria</taxon>
        <taxon>Pseudomonadati</taxon>
        <taxon>Pseudomonadota</taxon>
        <taxon>Alphaproteobacteria</taxon>
        <taxon>Hyphomicrobiales</taxon>
        <taxon>Phyllobacteriaceae</taxon>
        <taxon>Mesorhizobium</taxon>
    </lineage>
</organism>
<protein>
    <recommendedName>
        <fullName>Alkanesulfonate monooxygenase 1</fullName>
        <ecNumber>1.14.14.5</ecNumber>
    </recommendedName>
    <alternativeName>
        <fullName>FMNH2-dependent aliphatic sulfonate monooxygenase 1</fullName>
    </alternativeName>
</protein>
<proteinExistence type="inferred from homology"/>
<feature type="chain" id="PRO_0000216717" description="Alkanesulfonate monooxygenase 1">
    <location>
        <begin position="1"/>
        <end position="390"/>
    </location>
</feature>
<feature type="region of interest" description="Disordered" evidence="2">
    <location>
        <begin position="364"/>
        <end position="390"/>
    </location>
</feature>
<accession>Q98CB9</accession>
<evidence type="ECO:0000250" key="1"/>
<evidence type="ECO:0000256" key="2">
    <source>
        <dbReference type="SAM" id="MobiDB-lite"/>
    </source>
</evidence>
<evidence type="ECO:0000305" key="3"/>
<name>SSUD1_RHILO</name>
<gene>
    <name type="primary">ssuD1</name>
    <name type="ordered locus">mlr5216</name>
</gene>
<sequence>MTGDVPDRIKVLWFLPTHGDSRYLGTAEGGRSVDLPYLTQVAKAADTLGYYGVLLPTGRSCEDSWVIASALVPLTERLRFLVAVRPGLQSPTLAARMTATLDRISNGRLLINVVTGGDPLENKGDGIFLSHAERYEVTQEFLRIYKRVLSGETVEHQGKHLHIEDGRLLFPPVQTPYPPLYFGGSSDAGSTVAAQEIDKYLTWGEPPADVERKLDAVRELAEKAGRKLSFGIRLHVIARETTEEAWAAADRLISRLDDATIASAQKVFARMDSVGQARMSALHGGDRAKLEIAPNLWAGVGLVRGGAGTALVGDPDTIAERIDEYRRLGIDTFILSGYPHLEEAYRFGELVLPKLPTDHPVKATGSSVNTGPFGETIAGDHRPKSLASAS</sequence>
<comment type="function">
    <text evidence="1">Catalyzes the desulfonation of aliphatic sulfonates.</text>
</comment>
<comment type="catalytic activity">
    <reaction>
        <text>an alkanesulfonate + FMNH2 + O2 = an aldehyde + FMN + sulfite + H2O + 2 H(+)</text>
        <dbReference type="Rhea" id="RHEA:23064"/>
        <dbReference type="ChEBI" id="CHEBI:15377"/>
        <dbReference type="ChEBI" id="CHEBI:15378"/>
        <dbReference type="ChEBI" id="CHEBI:15379"/>
        <dbReference type="ChEBI" id="CHEBI:17359"/>
        <dbReference type="ChEBI" id="CHEBI:17478"/>
        <dbReference type="ChEBI" id="CHEBI:57618"/>
        <dbReference type="ChEBI" id="CHEBI:58210"/>
        <dbReference type="ChEBI" id="CHEBI:134249"/>
        <dbReference type="EC" id="1.14.14.5"/>
    </reaction>
</comment>
<comment type="similarity">
    <text evidence="3">Belongs to the SsuD family.</text>
</comment>
<reference key="1">
    <citation type="journal article" date="2000" name="DNA Res.">
        <title>Complete genome structure of the nitrogen-fixing symbiotic bacterium Mesorhizobium loti.</title>
        <authorList>
            <person name="Kaneko T."/>
            <person name="Nakamura Y."/>
            <person name="Sato S."/>
            <person name="Asamizu E."/>
            <person name="Kato T."/>
            <person name="Sasamoto S."/>
            <person name="Watanabe A."/>
            <person name="Idesawa K."/>
            <person name="Ishikawa A."/>
            <person name="Kawashima K."/>
            <person name="Kimura T."/>
            <person name="Kishida Y."/>
            <person name="Kiyokawa C."/>
            <person name="Kohara M."/>
            <person name="Matsumoto M."/>
            <person name="Matsuno A."/>
            <person name="Mochizuki Y."/>
            <person name="Nakayama S."/>
            <person name="Nakazaki N."/>
            <person name="Shimpo S."/>
            <person name="Sugimoto M."/>
            <person name="Takeuchi C."/>
            <person name="Yamada M."/>
            <person name="Tabata S."/>
        </authorList>
    </citation>
    <scope>NUCLEOTIDE SEQUENCE [LARGE SCALE GENOMIC DNA]</scope>
    <source>
        <strain>LMG 29417 / CECT 9101 / MAFF 303099</strain>
    </source>
</reference>
<keyword id="KW-0285">Flavoprotein</keyword>
<keyword id="KW-0288">FMN</keyword>
<keyword id="KW-0503">Monooxygenase</keyword>
<keyword id="KW-0560">Oxidoreductase</keyword>
<dbReference type="EC" id="1.14.14.5"/>
<dbReference type="EMBL" id="BA000012">
    <property type="protein sequence ID" value="BAB51702.1"/>
    <property type="molecule type" value="Genomic_DNA"/>
</dbReference>
<dbReference type="RefSeq" id="WP_010913041.1">
    <property type="nucleotide sequence ID" value="NC_002678.2"/>
</dbReference>
<dbReference type="SMR" id="Q98CB9"/>
<dbReference type="KEGG" id="mlo:mlr5216"/>
<dbReference type="PATRIC" id="fig|266835.9.peg.4129"/>
<dbReference type="eggNOG" id="COG2141">
    <property type="taxonomic scope" value="Bacteria"/>
</dbReference>
<dbReference type="HOGENOM" id="CLU_027853_1_0_5"/>
<dbReference type="Proteomes" id="UP000000552">
    <property type="component" value="Chromosome"/>
</dbReference>
<dbReference type="GO" id="GO:0008726">
    <property type="term" value="F:alkanesulfonate monooxygenase activity"/>
    <property type="evidence" value="ECO:0007669"/>
    <property type="project" value="UniProtKB-UniRule"/>
</dbReference>
<dbReference type="GO" id="GO:0046306">
    <property type="term" value="P:alkanesulfonate catabolic process"/>
    <property type="evidence" value="ECO:0007669"/>
    <property type="project" value="TreeGrafter"/>
</dbReference>
<dbReference type="CDD" id="cd01094">
    <property type="entry name" value="Alkanesulfonate_monoxygenase"/>
    <property type="match status" value="1"/>
</dbReference>
<dbReference type="Gene3D" id="3.20.20.30">
    <property type="entry name" value="Luciferase-like domain"/>
    <property type="match status" value="1"/>
</dbReference>
<dbReference type="HAMAP" id="MF_01229">
    <property type="entry name" value="Alkanesulf_monooxygen"/>
    <property type="match status" value="1"/>
</dbReference>
<dbReference type="InterPro" id="IPR019911">
    <property type="entry name" value="Alkanesulphonate_mOase_FMN-dep"/>
</dbReference>
<dbReference type="InterPro" id="IPR011251">
    <property type="entry name" value="Luciferase-like_dom"/>
</dbReference>
<dbReference type="InterPro" id="IPR036661">
    <property type="entry name" value="Luciferase-like_sf"/>
</dbReference>
<dbReference type="InterPro" id="IPR050172">
    <property type="entry name" value="SsuD_RutA_monooxygenase"/>
</dbReference>
<dbReference type="NCBIfam" id="TIGR03565">
    <property type="entry name" value="alk_sulf_monoox"/>
    <property type="match status" value="1"/>
</dbReference>
<dbReference type="NCBIfam" id="NF001939">
    <property type="entry name" value="PRK00719.1"/>
    <property type="match status" value="1"/>
</dbReference>
<dbReference type="PANTHER" id="PTHR42847">
    <property type="entry name" value="ALKANESULFONATE MONOOXYGENASE"/>
    <property type="match status" value="1"/>
</dbReference>
<dbReference type="PANTHER" id="PTHR42847:SF4">
    <property type="entry name" value="ALKANESULFONATE MONOOXYGENASE-RELATED"/>
    <property type="match status" value="1"/>
</dbReference>
<dbReference type="Pfam" id="PF00296">
    <property type="entry name" value="Bac_luciferase"/>
    <property type="match status" value="1"/>
</dbReference>
<dbReference type="SUPFAM" id="SSF51679">
    <property type="entry name" value="Bacterial luciferase-like"/>
    <property type="match status" value="1"/>
</dbReference>